<proteinExistence type="evidence at protein level"/>
<sequence>MEAGGLPLELWRMILAYLHLPDLGRCSLVCRAWYELILSLDSTRWRQLCLGCTECRHPNWPNQPDVEPESWREAFKQHYLASKTWTKNALDLESSICFSLFRRRRERRTLSVGPGREFDSLGSALAMASLYDRIVLFPGVYEEQGEIILKVPVEIVGQGKLGEVALLASIDQHCSTTRLCNLVFTPAWFSPIMYKTTSGHVQFDNCNFENGHIQVHGPGTCQVKFCTFKNTHIFLHNVPLCVLENCEFVGSENNSVTVEGHPSADKNWAYKYLLGLIKSSPTFLPTEDSDFLMSLDLESRDQAWSPKTCDIVIEGSQSPTSPASSSPKPGSKAGSQEAEVGSDGERVAQTPDSSDGGLSPSGEDEDEDQLMYRLSYQVQGPRPVLGGSFLGPPLPGASIQLPSCLVLNSLQQELQKDKEAMALANSVQGCLIRKCLFRDGKGGVFVCSHGRAKMEGNIFRNLTYAVRCIHNSKIIMLRNDIYRCRASGIFLRLEGGGLIAGNNIYHNAEAGVDIRKKSNPLILCNQIHHGLRSGIVVLGNGKGIIRNNQIFSNKEAGIYILYHGNPVVSGNHIFKGRAAGIAVNENGKGLITENVIRENQWGGVDIRRGGIPVLRSNLICFGYSDGVVVGDEGKGLIEGNTIYANKGCGVWMMSSSLPHVTSNHVSYNGLYGVAVFSQKDGSSELPRGHRAQENFSEDGDAILWETELEKEDDPLRRPITIALVESNSINHNGASGLYVQSSEALHVITNVIHANGDRGITVAQSSQPTRVANNSISCNRQSGVKVEAQCKVELRGNGIYDNRGHGIITKGDSTIVIENDIIGNRGSGLQLLPRSDTKVIKNRIHSFRAYGIAVRGRAKALVQENIIFQGKTSKTIFQQISNNRECIMQNNKFLVFKKKSDTWRLVNPPARPHLENSLRRPSAAHNGQKVTAMATRITARVEGGYHSNRSVFCTIL</sequence>
<keyword id="KW-0025">Alternative splicing</keyword>
<keyword id="KW-0053">Apoptosis</keyword>
<keyword id="KW-0963">Cytoplasm</keyword>
<keyword id="KW-0597">Phosphoprotein</keyword>
<keyword id="KW-1267">Proteomics identification</keyword>
<keyword id="KW-1185">Reference proteome</keyword>
<keyword id="KW-0677">Repeat</keyword>
<keyword id="KW-0833">Ubl conjugation pathway</keyword>
<reference key="1">
    <citation type="journal article" date="2004" name="Nature">
        <title>DNA sequence and analysis of human chromosome 9.</title>
        <authorList>
            <person name="Humphray S.J."/>
            <person name="Oliver K."/>
            <person name="Hunt A.R."/>
            <person name="Plumb R.W."/>
            <person name="Loveland J.E."/>
            <person name="Howe K.L."/>
            <person name="Andrews T.D."/>
            <person name="Searle S."/>
            <person name="Hunt S.E."/>
            <person name="Scott C.E."/>
            <person name="Jones M.C."/>
            <person name="Ainscough R."/>
            <person name="Almeida J.P."/>
            <person name="Ambrose K.D."/>
            <person name="Ashwell R.I.S."/>
            <person name="Babbage A.K."/>
            <person name="Babbage S."/>
            <person name="Bagguley C.L."/>
            <person name="Bailey J."/>
            <person name="Banerjee R."/>
            <person name="Barker D.J."/>
            <person name="Barlow K.F."/>
            <person name="Bates K."/>
            <person name="Beasley H."/>
            <person name="Beasley O."/>
            <person name="Bird C.P."/>
            <person name="Bray-Allen S."/>
            <person name="Brown A.J."/>
            <person name="Brown J.Y."/>
            <person name="Burford D."/>
            <person name="Burrill W."/>
            <person name="Burton J."/>
            <person name="Carder C."/>
            <person name="Carter N.P."/>
            <person name="Chapman J.C."/>
            <person name="Chen Y."/>
            <person name="Clarke G."/>
            <person name="Clark S.Y."/>
            <person name="Clee C.M."/>
            <person name="Clegg S."/>
            <person name="Collier R.E."/>
            <person name="Corby N."/>
            <person name="Crosier M."/>
            <person name="Cummings A.T."/>
            <person name="Davies J."/>
            <person name="Dhami P."/>
            <person name="Dunn M."/>
            <person name="Dutta I."/>
            <person name="Dyer L.W."/>
            <person name="Earthrowl M.E."/>
            <person name="Faulkner L."/>
            <person name="Fleming C.J."/>
            <person name="Frankish A."/>
            <person name="Frankland J.A."/>
            <person name="French L."/>
            <person name="Fricker D.G."/>
            <person name="Garner P."/>
            <person name="Garnett J."/>
            <person name="Ghori J."/>
            <person name="Gilbert J.G.R."/>
            <person name="Glison C."/>
            <person name="Grafham D.V."/>
            <person name="Gribble S."/>
            <person name="Griffiths C."/>
            <person name="Griffiths-Jones S."/>
            <person name="Grocock R."/>
            <person name="Guy J."/>
            <person name="Hall R.E."/>
            <person name="Hammond S."/>
            <person name="Harley J.L."/>
            <person name="Harrison E.S.I."/>
            <person name="Hart E.A."/>
            <person name="Heath P.D."/>
            <person name="Henderson C.D."/>
            <person name="Hopkins B.L."/>
            <person name="Howard P.J."/>
            <person name="Howden P.J."/>
            <person name="Huckle E."/>
            <person name="Johnson C."/>
            <person name="Johnson D."/>
            <person name="Joy A.A."/>
            <person name="Kay M."/>
            <person name="Keenan S."/>
            <person name="Kershaw J.K."/>
            <person name="Kimberley A.M."/>
            <person name="King A."/>
            <person name="Knights A."/>
            <person name="Laird G.K."/>
            <person name="Langford C."/>
            <person name="Lawlor S."/>
            <person name="Leongamornlert D.A."/>
            <person name="Leversha M."/>
            <person name="Lloyd C."/>
            <person name="Lloyd D.M."/>
            <person name="Lovell J."/>
            <person name="Martin S."/>
            <person name="Mashreghi-Mohammadi M."/>
            <person name="Matthews L."/>
            <person name="McLaren S."/>
            <person name="McLay K.E."/>
            <person name="McMurray A."/>
            <person name="Milne S."/>
            <person name="Nickerson T."/>
            <person name="Nisbett J."/>
            <person name="Nordsiek G."/>
            <person name="Pearce A.V."/>
            <person name="Peck A.I."/>
            <person name="Porter K.M."/>
            <person name="Pandian R."/>
            <person name="Pelan S."/>
            <person name="Phillimore B."/>
            <person name="Povey S."/>
            <person name="Ramsey Y."/>
            <person name="Rand V."/>
            <person name="Scharfe M."/>
            <person name="Sehra H.K."/>
            <person name="Shownkeen R."/>
            <person name="Sims S.K."/>
            <person name="Skuce C.D."/>
            <person name="Smith M."/>
            <person name="Steward C.A."/>
            <person name="Swarbreck D."/>
            <person name="Sycamore N."/>
            <person name="Tester J."/>
            <person name="Thorpe A."/>
            <person name="Tracey A."/>
            <person name="Tromans A."/>
            <person name="Thomas D.W."/>
            <person name="Wall M."/>
            <person name="Wallis J.M."/>
            <person name="West A.P."/>
            <person name="Whitehead S.L."/>
            <person name="Willey D.L."/>
            <person name="Williams S.A."/>
            <person name="Wilming L."/>
            <person name="Wray P.W."/>
            <person name="Young L."/>
            <person name="Ashurst J.L."/>
            <person name="Coulson A."/>
            <person name="Blocker H."/>
            <person name="Durbin R.M."/>
            <person name="Sulston J.E."/>
            <person name="Hubbard T."/>
            <person name="Jackson M.J."/>
            <person name="Bentley D.R."/>
            <person name="Beck S."/>
            <person name="Rogers J."/>
            <person name="Dunham I."/>
        </authorList>
    </citation>
    <scope>NUCLEOTIDE SEQUENCE [LARGE SCALE GENOMIC DNA]</scope>
</reference>
<reference key="2">
    <citation type="submission" date="2005-09" db="EMBL/GenBank/DDBJ databases">
        <authorList>
            <person name="Mural R.J."/>
            <person name="Istrail S."/>
            <person name="Sutton G.G."/>
            <person name="Florea L."/>
            <person name="Halpern A.L."/>
            <person name="Mobarry C.M."/>
            <person name="Lippert R."/>
            <person name="Walenz B."/>
            <person name="Shatkay H."/>
            <person name="Dew I."/>
            <person name="Miller J.R."/>
            <person name="Flanigan M.J."/>
            <person name="Edwards N.J."/>
            <person name="Bolanos R."/>
            <person name="Fasulo D."/>
            <person name="Halldorsson B.V."/>
            <person name="Hannenhalli S."/>
            <person name="Turner R."/>
            <person name="Yooseph S."/>
            <person name="Lu F."/>
            <person name="Nusskern D.R."/>
            <person name="Shue B.C."/>
            <person name="Zheng X.H."/>
            <person name="Zhong F."/>
            <person name="Delcher A.L."/>
            <person name="Huson D.H."/>
            <person name="Kravitz S.A."/>
            <person name="Mouchard L."/>
            <person name="Reinert K."/>
            <person name="Remington K.A."/>
            <person name="Clark A.G."/>
            <person name="Waterman M.S."/>
            <person name="Eichler E.E."/>
            <person name="Adams M.D."/>
            <person name="Hunkapiller M.W."/>
            <person name="Myers E.W."/>
            <person name="Venter J.C."/>
        </authorList>
    </citation>
    <scope>NUCLEOTIDE SEQUENCE [LARGE SCALE GENOMIC DNA]</scope>
</reference>
<reference key="3">
    <citation type="journal article" date="2004" name="Genome Res.">
        <title>The status, quality, and expansion of the NIH full-length cDNA project: the Mammalian Gene Collection (MGC).</title>
        <authorList>
            <consortium name="The MGC Project Team"/>
        </authorList>
    </citation>
    <scope>NUCLEOTIDE SEQUENCE [LARGE SCALE MRNA] (ISOFORMS 1 AND 2)</scope>
</reference>
<reference key="4">
    <citation type="journal article" date="1999" name="Curr. Biol.">
        <title>A family of mammalian F-box proteins.</title>
        <authorList>
            <person name="Winston J.T."/>
            <person name="Koepp D.M."/>
            <person name="Zhu C."/>
            <person name="Elledge S.J."/>
            <person name="Harper J.W."/>
        </authorList>
    </citation>
    <scope>NUCLEOTIDE SEQUENCE [MRNA] OF 1-521 (ISOFORM 1)</scope>
</reference>
<reference key="5">
    <citation type="journal article" date="1999" name="Curr. Biol.">
        <title>Identification of a family of human F-box proteins.</title>
        <authorList>
            <person name="Cenciarelli C."/>
            <person name="Chiaur D.S."/>
            <person name="Guardavaccaro D."/>
            <person name="Parks W."/>
            <person name="Vidal M."/>
            <person name="Pagano M."/>
        </authorList>
    </citation>
    <scope>NUCLEOTIDE SEQUENCE [MRNA] OF 1-162 (ISOFORM 1)</scope>
</reference>
<reference key="6">
    <citation type="journal article" date="2013" name="Proc. Natl. Acad. Sci. U.S.A.">
        <title>Related F-box proteins control cell death in Caenorhabditis elegans and human lymphoma.</title>
        <authorList>
            <person name="Chiorazzi M."/>
            <person name="Rui L."/>
            <person name="Yang Y."/>
            <person name="Ceribelli M."/>
            <person name="Tishbi N."/>
            <person name="Maurer C.W."/>
            <person name="Ranuncolo S.M."/>
            <person name="Zhao H."/>
            <person name="Xu W."/>
            <person name="Chan W.C."/>
            <person name="Jaffe E.S."/>
            <person name="Gascoyne R.D."/>
            <person name="Campo E."/>
            <person name="Rosenwald A."/>
            <person name="Ott G."/>
            <person name="Delabie J."/>
            <person name="Rimsza L.M."/>
            <person name="Shaham S."/>
            <person name="Staudt L.M."/>
        </authorList>
    </citation>
    <scope>FUNCTION IN UBIQUITINATION OF BCL2</scope>
    <scope>INTERACTION WITH BCL2</scope>
    <scope>SUBCELLULAR LOCATION</scope>
    <scope>IDENTIFICATION IN THE SCF(FBXO10) COMPLEX</scope>
    <scope>VARIANTS HIS-44; ASN-212; CYS-762 AND TRP-825</scope>
    <scope>CHARACTERIZATION OF VARIANTS HIS-44; CYS-762 AND TRP-825</scope>
</reference>
<reference key="7">
    <citation type="journal article" date="2014" name="Dev. Cell">
        <title>DRE-1/FBXO11-dependent degradation of BLMP-1/BLIMP-1 governs C. elegans developmental timing and maturation.</title>
        <authorList>
            <person name="Horn M."/>
            <person name="Geisen C."/>
            <person name="Cermak L."/>
            <person name="Becker B."/>
            <person name="Nakamura S."/>
            <person name="Klein C."/>
            <person name="Pagano M."/>
            <person name="Antebi A."/>
        </authorList>
    </citation>
    <scope>INTERACTION WITH PRDM1</scope>
</reference>
<reference key="8">
    <citation type="journal article" date="2017" name="FASEB J.">
        <title>Receptor for advanced glycation end products is targeted by FBXO10 for ubiquitination and degradation.</title>
        <authorList>
            <person name="Evankovich J."/>
            <person name="Lear T."/>
            <person name="Mckelvey A."/>
            <person name="Dunn S."/>
            <person name="Londino J."/>
            <person name="Liu Y."/>
            <person name="Chen B.B."/>
            <person name="Mallampalli R.K."/>
        </authorList>
    </citation>
    <scope>FUNCTION</scope>
</reference>
<reference key="9">
    <citation type="journal article" date="2020" name="Leukemia">
        <title>Recent BCR stimulation induces a negative autoregulatory loop via FBXO10 mediated degradation of HGAL.</title>
        <authorList>
            <person name="Guo F."/>
            <person name="Luo Y."/>
            <person name="Jiang X."/>
            <person name="Lu X."/>
            <person name="Roberti D."/>
            <person name="Lossos C."/>
            <person name="Kunkalla K."/>
            <person name="Magistri M."/>
            <person name="Rui L."/>
            <person name="Verdun R."/>
            <person name="Vega F."/>
            <person name="Moy V.T."/>
            <person name="Lossos I.S."/>
        </authorList>
    </citation>
    <scope>FUNCTION</scope>
    <scope>SUBCELLULAR LOCATION</scope>
</reference>
<name>FBX10_HUMAN</name>
<evidence type="ECO:0000250" key="1">
    <source>
        <dbReference type="UniProtKB" id="Q7TQF2"/>
    </source>
</evidence>
<evidence type="ECO:0000255" key="2">
    <source>
        <dbReference type="PROSITE-ProRule" id="PRU00080"/>
    </source>
</evidence>
<evidence type="ECO:0000256" key="3">
    <source>
        <dbReference type="SAM" id="MobiDB-lite"/>
    </source>
</evidence>
<evidence type="ECO:0000269" key="4">
    <source>
    </source>
</evidence>
<evidence type="ECO:0000269" key="5">
    <source>
    </source>
</evidence>
<evidence type="ECO:0000269" key="6">
    <source>
    </source>
</evidence>
<evidence type="ECO:0000269" key="7">
    <source>
    </source>
</evidence>
<evidence type="ECO:0000303" key="8">
    <source>
    </source>
</evidence>
<evidence type="ECO:0000305" key="9"/>
<gene>
    <name type="primary">FBXO10</name>
    <name type="synonym">FBX10</name>
    <name type="synonym">PRMT11</name>
</gene>
<dbReference type="EMBL" id="AL513165">
    <property type="status" value="NOT_ANNOTATED_CDS"/>
    <property type="molecule type" value="Genomic_DNA"/>
</dbReference>
<dbReference type="EMBL" id="CH471071">
    <property type="protein sequence ID" value="EAW58274.1"/>
    <property type="molecule type" value="Genomic_DNA"/>
</dbReference>
<dbReference type="EMBL" id="CH471071">
    <property type="protein sequence ID" value="EAW58275.1"/>
    <property type="molecule type" value="Genomic_DNA"/>
</dbReference>
<dbReference type="EMBL" id="BC125124">
    <property type="protein sequence ID" value="AAI25125.1"/>
    <property type="molecule type" value="mRNA"/>
</dbReference>
<dbReference type="EMBL" id="BC125125">
    <property type="protein sequence ID" value="AAI25126.1"/>
    <property type="molecule type" value="mRNA"/>
</dbReference>
<dbReference type="EMBL" id="BC140785">
    <property type="protein sequence ID" value="AAI40786.1"/>
    <property type="molecule type" value="mRNA"/>
</dbReference>
<dbReference type="EMBL" id="BC171785">
    <property type="protein sequence ID" value="AAI71785.1"/>
    <property type="molecule type" value="mRNA"/>
</dbReference>
<dbReference type="EMBL" id="AF176705">
    <property type="protein sequence ID" value="AAF03705.1"/>
    <property type="status" value="ALT_SEQ"/>
    <property type="molecule type" value="mRNA"/>
</dbReference>
<dbReference type="EMBL" id="AF174598">
    <property type="protein sequence ID" value="AAF04519.1"/>
    <property type="status" value="ALT_INIT"/>
    <property type="molecule type" value="mRNA"/>
</dbReference>
<dbReference type="CCDS" id="CCDS47966.1">
    <molecule id="Q9UK96-1"/>
</dbReference>
<dbReference type="RefSeq" id="NP_036298.2">
    <molecule id="Q9UK96-1"/>
    <property type="nucleotide sequence ID" value="NM_012166.3"/>
</dbReference>
<dbReference type="RefSeq" id="XP_006716817.1">
    <property type="nucleotide sequence ID" value="XM_006716754.3"/>
</dbReference>
<dbReference type="RefSeq" id="XP_016870108.1">
    <molecule id="Q9UK96-1"/>
    <property type="nucleotide sequence ID" value="XM_017014619.2"/>
</dbReference>
<dbReference type="RefSeq" id="XP_047279176.1">
    <molecule id="Q9UK96-1"/>
    <property type="nucleotide sequence ID" value="XM_047423220.1"/>
</dbReference>
<dbReference type="RefSeq" id="XP_047279177.1">
    <molecule id="Q9UK96-1"/>
    <property type="nucleotide sequence ID" value="XM_047423221.1"/>
</dbReference>
<dbReference type="RefSeq" id="XP_054218697.1">
    <molecule id="Q9UK96-1"/>
    <property type="nucleotide sequence ID" value="XM_054362722.1"/>
</dbReference>
<dbReference type="RefSeq" id="XP_054218698.1">
    <molecule id="Q9UK96-1"/>
    <property type="nucleotide sequence ID" value="XM_054362723.1"/>
</dbReference>
<dbReference type="RefSeq" id="XP_054218699.1">
    <molecule id="Q9UK96-1"/>
    <property type="nucleotide sequence ID" value="XM_054362724.1"/>
</dbReference>
<dbReference type="SMR" id="Q9UK96"/>
<dbReference type="BioGRID" id="117651">
    <property type="interactions" value="44"/>
</dbReference>
<dbReference type="ComplexPortal" id="CPX-7923">
    <property type="entry name" value="SCF E3 ubiquitin ligase complex, FBXO10 variant"/>
</dbReference>
<dbReference type="CORUM" id="Q9UK96"/>
<dbReference type="FunCoup" id="Q9UK96">
    <property type="interactions" value="315"/>
</dbReference>
<dbReference type="IntAct" id="Q9UK96">
    <property type="interactions" value="43"/>
</dbReference>
<dbReference type="STRING" id="9606.ENSP00000403802"/>
<dbReference type="GlyGen" id="Q9UK96">
    <property type="glycosylation" value="1 site"/>
</dbReference>
<dbReference type="iPTMnet" id="Q9UK96"/>
<dbReference type="PhosphoSitePlus" id="Q9UK96"/>
<dbReference type="SwissPalm" id="Q9UK96"/>
<dbReference type="BioMuta" id="FBXO10"/>
<dbReference type="DMDM" id="296439345"/>
<dbReference type="jPOST" id="Q9UK96"/>
<dbReference type="MassIVE" id="Q9UK96"/>
<dbReference type="PaxDb" id="9606-ENSP00000403802"/>
<dbReference type="PeptideAtlas" id="Q9UK96"/>
<dbReference type="ProteomicsDB" id="58678"/>
<dbReference type="ProteomicsDB" id="84741">
    <molecule id="Q9UK96-1"/>
</dbReference>
<dbReference type="Pumba" id="Q9UK96"/>
<dbReference type="Antibodypedia" id="26292">
    <property type="antibodies" value="57 antibodies from 17 providers"/>
</dbReference>
<dbReference type="DNASU" id="26267"/>
<dbReference type="Ensembl" id="ENST00000432825.7">
    <molecule id="Q9UK96-1"/>
    <property type="protein sequence ID" value="ENSP00000403802.2"/>
    <property type="gene ID" value="ENSG00000147912.13"/>
</dbReference>
<dbReference type="GeneID" id="26267"/>
<dbReference type="KEGG" id="hsa:26267"/>
<dbReference type="MANE-Select" id="ENST00000432825.7">
    <property type="protein sequence ID" value="ENSP00000403802.2"/>
    <property type="RefSeq nucleotide sequence ID" value="NM_012166.3"/>
    <property type="RefSeq protein sequence ID" value="NP_036298.2"/>
</dbReference>
<dbReference type="UCSC" id="uc004aab.3">
    <molecule id="Q9UK96-1"/>
    <property type="organism name" value="human"/>
</dbReference>
<dbReference type="AGR" id="HGNC:13589"/>
<dbReference type="CTD" id="26267"/>
<dbReference type="DisGeNET" id="26267"/>
<dbReference type="GeneCards" id="FBXO10"/>
<dbReference type="HGNC" id="HGNC:13589">
    <property type="gene designation" value="FBXO10"/>
</dbReference>
<dbReference type="HPA" id="ENSG00000147912">
    <property type="expression patterns" value="Tissue enhanced (skeletal)"/>
</dbReference>
<dbReference type="MIM" id="609092">
    <property type="type" value="gene"/>
</dbReference>
<dbReference type="neXtProt" id="NX_Q9UK96"/>
<dbReference type="OpenTargets" id="ENSG00000147912"/>
<dbReference type="PharmGKB" id="PA28030"/>
<dbReference type="VEuPathDB" id="HostDB:ENSG00000147912"/>
<dbReference type="eggNOG" id="KOG1777">
    <property type="taxonomic scope" value="Eukaryota"/>
</dbReference>
<dbReference type="GeneTree" id="ENSGT00530000063425"/>
<dbReference type="HOGENOM" id="CLU_013632_0_0_1"/>
<dbReference type="InParanoid" id="Q9UK96"/>
<dbReference type="OMA" id="CNLIFMP"/>
<dbReference type="OrthoDB" id="427974at2759"/>
<dbReference type="PAN-GO" id="Q9UK96">
    <property type="GO annotations" value="3 GO annotations based on evolutionary models"/>
</dbReference>
<dbReference type="PhylomeDB" id="Q9UK96"/>
<dbReference type="TreeFam" id="TF313602"/>
<dbReference type="PathwayCommons" id="Q9UK96"/>
<dbReference type="Reactome" id="R-HSA-8951664">
    <property type="pathway name" value="Neddylation"/>
</dbReference>
<dbReference type="Reactome" id="R-HSA-983168">
    <property type="pathway name" value="Antigen processing: Ubiquitination &amp; Proteasome degradation"/>
</dbReference>
<dbReference type="SignaLink" id="Q9UK96"/>
<dbReference type="UniPathway" id="UPA00143"/>
<dbReference type="BioGRID-ORCS" id="26267">
    <property type="hits" value="10 hits in 1196 CRISPR screens"/>
</dbReference>
<dbReference type="ChiTaRS" id="FBXO10">
    <property type="organism name" value="human"/>
</dbReference>
<dbReference type="GenomeRNAi" id="26267"/>
<dbReference type="Pharos" id="Q9UK96">
    <property type="development level" value="Tbio"/>
</dbReference>
<dbReference type="PRO" id="PR:Q9UK96"/>
<dbReference type="Proteomes" id="UP000005640">
    <property type="component" value="Chromosome 9"/>
</dbReference>
<dbReference type="RNAct" id="Q9UK96">
    <property type="molecule type" value="protein"/>
</dbReference>
<dbReference type="Bgee" id="ENSG00000147912">
    <property type="expression patterns" value="Expressed in adrenal tissue and 126 other cell types or tissues"/>
</dbReference>
<dbReference type="ExpressionAtlas" id="Q9UK96">
    <property type="expression patterns" value="baseline and differential"/>
</dbReference>
<dbReference type="GO" id="GO:0005737">
    <property type="term" value="C:cytoplasm"/>
    <property type="evidence" value="ECO:0000314"/>
    <property type="project" value="UniProtKB"/>
</dbReference>
<dbReference type="GO" id="GO:0005829">
    <property type="term" value="C:cytosol"/>
    <property type="evidence" value="ECO:0000304"/>
    <property type="project" value="Reactome"/>
</dbReference>
<dbReference type="GO" id="GO:0000151">
    <property type="term" value="C:ubiquitin ligase complex"/>
    <property type="evidence" value="ECO:0000303"/>
    <property type="project" value="UniProtKB"/>
</dbReference>
<dbReference type="GO" id="GO:0004842">
    <property type="term" value="F:ubiquitin-protein transferase activity"/>
    <property type="evidence" value="ECO:0000303"/>
    <property type="project" value="UniProtKB"/>
</dbReference>
<dbReference type="GO" id="GO:0006915">
    <property type="term" value="P:apoptotic process"/>
    <property type="evidence" value="ECO:0007669"/>
    <property type="project" value="UniProtKB-KW"/>
</dbReference>
<dbReference type="GO" id="GO:0016567">
    <property type="term" value="P:protein ubiquitination"/>
    <property type="evidence" value="ECO:0000303"/>
    <property type="project" value="UniProtKB"/>
</dbReference>
<dbReference type="GO" id="GO:0042981">
    <property type="term" value="P:regulation of apoptotic process"/>
    <property type="evidence" value="ECO:0000315"/>
    <property type="project" value="UniProtKB"/>
</dbReference>
<dbReference type="GO" id="GO:0006511">
    <property type="term" value="P:ubiquitin-dependent protein catabolic process"/>
    <property type="evidence" value="ECO:0000315"/>
    <property type="project" value="UniProtKB"/>
</dbReference>
<dbReference type="CDD" id="cd22090">
    <property type="entry name" value="F-box_FBXO10"/>
    <property type="match status" value="1"/>
</dbReference>
<dbReference type="FunFam" id="1.20.1280.50:FF:000009">
    <property type="entry name" value="F-box only protein 10"/>
    <property type="match status" value="1"/>
</dbReference>
<dbReference type="FunFam" id="2.160.20.10:FF:000015">
    <property type="entry name" value="F-box only protein 10"/>
    <property type="match status" value="1"/>
</dbReference>
<dbReference type="FunFam" id="2.160.20.10:FF:000017">
    <property type="entry name" value="F-box only protein 10"/>
    <property type="match status" value="1"/>
</dbReference>
<dbReference type="FunFam" id="2.160.20.10:FF:000022">
    <property type="entry name" value="F-box only protein 10"/>
    <property type="match status" value="1"/>
</dbReference>
<dbReference type="Gene3D" id="1.20.1280.50">
    <property type="match status" value="1"/>
</dbReference>
<dbReference type="Gene3D" id="2.160.20.10">
    <property type="entry name" value="Single-stranded right-handed beta-helix, Pectin lyase-like"/>
    <property type="match status" value="3"/>
</dbReference>
<dbReference type="InterPro" id="IPR039448">
    <property type="entry name" value="Beta_helix"/>
</dbReference>
<dbReference type="InterPro" id="IPR006633">
    <property type="entry name" value="Carb-bd_sugar_hydrolysis-dom"/>
</dbReference>
<dbReference type="InterPro" id="IPR036047">
    <property type="entry name" value="F-box-like_dom_sf"/>
</dbReference>
<dbReference type="InterPro" id="IPR001810">
    <property type="entry name" value="F-box_dom"/>
</dbReference>
<dbReference type="InterPro" id="IPR007742">
    <property type="entry name" value="NosD_dom"/>
</dbReference>
<dbReference type="InterPro" id="IPR022441">
    <property type="entry name" value="Para_beta_helix_rpt-2"/>
</dbReference>
<dbReference type="InterPro" id="IPR006626">
    <property type="entry name" value="PbH1"/>
</dbReference>
<dbReference type="InterPro" id="IPR012334">
    <property type="entry name" value="Pectin_lyas_fold"/>
</dbReference>
<dbReference type="InterPro" id="IPR011050">
    <property type="entry name" value="Pectin_lyase_fold/virulence"/>
</dbReference>
<dbReference type="InterPro" id="IPR051550">
    <property type="entry name" value="SCF-Subunits/Alg-Epimerases"/>
</dbReference>
<dbReference type="NCBIfam" id="TIGR03804">
    <property type="entry name" value="para_beta_helix"/>
    <property type="match status" value="1"/>
</dbReference>
<dbReference type="PANTHER" id="PTHR22990">
    <property type="entry name" value="F-BOX ONLY PROTEIN"/>
    <property type="match status" value="1"/>
</dbReference>
<dbReference type="PANTHER" id="PTHR22990:SF15">
    <property type="entry name" value="F-BOX ONLY PROTEIN 10"/>
    <property type="match status" value="1"/>
</dbReference>
<dbReference type="Pfam" id="PF13229">
    <property type="entry name" value="Beta_helix"/>
    <property type="match status" value="1"/>
</dbReference>
<dbReference type="Pfam" id="PF12937">
    <property type="entry name" value="F-box-like"/>
    <property type="match status" value="1"/>
</dbReference>
<dbReference type="Pfam" id="PF05048">
    <property type="entry name" value="NosD"/>
    <property type="match status" value="1"/>
</dbReference>
<dbReference type="SMART" id="SM00722">
    <property type="entry name" value="CASH"/>
    <property type="match status" value="3"/>
</dbReference>
<dbReference type="SMART" id="SM00256">
    <property type="entry name" value="FBOX"/>
    <property type="match status" value="1"/>
</dbReference>
<dbReference type="SMART" id="SM00710">
    <property type="entry name" value="PbH1"/>
    <property type="match status" value="18"/>
</dbReference>
<dbReference type="SUPFAM" id="SSF81383">
    <property type="entry name" value="F-box domain"/>
    <property type="match status" value="1"/>
</dbReference>
<dbReference type="SUPFAM" id="SSF51126">
    <property type="entry name" value="Pectin lyase-like"/>
    <property type="match status" value="4"/>
</dbReference>
<dbReference type="PROSITE" id="PS50181">
    <property type="entry name" value="FBOX"/>
    <property type="match status" value="1"/>
</dbReference>
<protein>
    <recommendedName>
        <fullName>F-box only protein 10</fullName>
    </recommendedName>
</protein>
<organism>
    <name type="scientific">Homo sapiens</name>
    <name type="common">Human</name>
    <dbReference type="NCBI Taxonomy" id="9606"/>
    <lineage>
        <taxon>Eukaryota</taxon>
        <taxon>Metazoa</taxon>
        <taxon>Chordata</taxon>
        <taxon>Craniata</taxon>
        <taxon>Vertebrata</taxon>
        <taxon>Euteleostomi</taxon>
        <taxon>Mammalia</taxon>
        <taxon>Eutheria</taxon>
        <taxon>Euarchontoglires</taxon>
        <taxon>Primates</taxon>
        <taxon>Haplorrhini</taxon>
        <taxon>Catarrhini</taxon>
        <taxon>Hominidae</taxon>
        <taxon>Homo</taxon>
    </lineage>
</organism>
<accession>Q9UK96</accession>
<accession>Q08AL3</accession>
<accession>Q08AL4</accession>
<accession>Q5JRT8</accession>
<accession>Q9UKC3</accession>
<feature type="chain" id="PRO_0000119889" description="F-box only protein 10">
    <location>
        <begin position="1"/>
        <end position="956"/>
    </location>
</feature>
<feature type="domain" description="F-box" evidence="2">
    <location>
        <begin position="1"/>
        <end position="48"/>
    </location>
</feature>
<feature type="repeat" description="PbH1 1">
    <location>
        <begin position="198"/>
        <end position="217"/>
    </location>
</feature>
<feature type="repeat" description="PbH1 2">
    <location>
        <begin position="238"/>
        <end position="260"/>
    </location>
</feature>
<feature type="repeat" description="PbH1 3">
    <location>
        <begin position="427"/>
        <end position="448"/>
    </location>
</feature>
<feature type="repeat" description="PbH1 4">
    <location>
        <begin position="449"/>
        <end position="470"/>
    </location>
</feature>
<feature type="repeat" description="PbH1 5">
    <location>
        <begin position="471"/>
        <end position="493"/>
    </location>
</feature>
<feature type="repeat" description="PbH1 6">
    <location>
        <begin position="494"/>
        <end position="516"/>
    </location>
</feature>
<feature type="repeat" description="PbH1 7">
    <location>
        <begin position="538"/>
        <end position="560"/>
    </location>
</feature>
<feature type="repeat" description="PbH1 8">
    <location>
        <begin position="561"/>
        <end position="583"/>
    </location>
</feature>
<feature type="repeat" description="PbH1 9">
    <location>
        <begin position="584"/>
        <end position="606"/>
    </location>
</feature>
<feature type="repeat" description="PbH1 10">
    <location>
        <begin position="607"/>
        <end position="629"/>
    </location>
</feature>
<feature type="repeat" description="PbH1 11">
    <location>
        <begin position="630"/>
        <end position="652"/>
    </location>
</feature>
<feature type="repeat" description="PbH1 12">
    <location>
        <begin position="653"/>
        <end position="675"/>
    </location>
</feature>
<feature type="repeat" description="PbH1 13">
    <location>
        <begin position="717"/>
        <end position="739"/>
    </location>
</feature>
<feature type="repeat" description="PbH1 14">
    <location>
        <begin position="740"/>
        <end position="762"/>
    </location>
</feature>
<feature type="repeat" description="PbH1 15">
    <location>
        <begin position="764"/>
        <end position="786"/>
    </location>
</feature>
<feature type="repeat" description="PbH1 16">
    <location>
        <begin position="787"/>
        <end position="809"/>
    </location>
</feature>
<feature type="repeat" description="PbH1 17">
    <location>
        <begin position="832"/>
        <end position="854"/>
    </location>
</feature>
<feature type="region of interest" description="Disordered" evidence="3">
    <location>
        <begin position="314"/>
        <end position="367"/>
    </location>
</feature>
<feature type="compositionally biased region" description="Low complexity" evidence="3">
    <location>
        <begin position="316"/>
        <end position="336"/>
    </location>
</feature>
<feature type="compositionally biased region" description="Low complexity" evidence="3">
    <location>
        <begin position="351"/>
        <end position="361"/>
    </location>
</feature>
<feature type="modified residue" description="Phosphoserine" evidence="1">
    <location>
        <position position="321"/>
    </location>
</feature>
<feature type="modified residue" description="Phosphoserine" evidence="1">
    <location>
        <position position="326"/>
    </location>
</feature>
<feature type="splice variant" id="VSP_056318" description="In isoform 2." evidence="8">
    <location>
        <begin position="1"/>
        <end position="475"/>
    </location>
</feature>
<feature type="sequence variant" id="VAR_070692" description="Found in a patient with lymphoma; inhibits interaction with SKP1; dbSNP:rs780121584." evidence="4">
    <original>R</original>
    <variation>H</variation>
    <location>
        <position position="44"/>
    </location>
</feature>
<feature type="sequence variant" id="VAR_055801" description="Found in a patient with lymphoma; dbSNP:rs7044561." evidence="4">
    <original>H</original>
    <variation>N</variation>
    <location>
        <position position="212"/>
    </location>
</feature>
<feature type="sequence variant" id="VAR_070693" description="Found in a patient with lymphoma; partial loss of function in controlling the stability of BCL2; requires 2 nucleotide substitutions." evidence="4">
    <original>V</original>
    <variation>C</variation>
    <location>
        <position position="762"/>
    </location>
</feature>
<feature type="sequence variant" id="VAR_070694" description="Found in a patient with lymphoma; partial loss of function in controlling the stability of BCL2; dbSNP:rs573535073." evidence="4">
    <original>R</original>
    <variation>W</variation>
    <location>
        <position position="825"/>
    </location>
</feature>
<comment type="function">
    <text evidence="4 6 7">Substrate-recognition component of the SCF (SKP1-CUL1-F-box protein)-type E3 ubiquitin ligase complex. Mediates the ubiquitination and degradation of BCL2, an antiapoptotic protein, thereby playing a role in apoptosis by controlling the stability of BCL2. Targets also the receptor for advanced glycation end products RAGE for ubiquitination and subsequent lysosomal degradation (PubMed:28515150). Directly controls HGAL/GCSAM ubiquitination and degradation and thereby decreases BCR signaling (PubMed:31570756).</text>
</comment>
<comment type="pathway">
    <text>Protein modification; protein ubiquitination.</text>
</comment>
<comment type="subunit">
    <text evidence="4 5">Component of the SCF(FBXO10) complex consisting of CUL1, SKP1 and FBXO10 (PubMed:23431138). Interacts with BCL2 (PubMed:23431138). Interacts with PRDM1 (PubMed:24613396).</text>
</comment>
<comment type="subcellular location">
    <subcellularLocation>
        <location evidence="4 7">Cytoplasm</location>
    </subcellularLocation>
</comment>
<comment type="alternative products">
    <event type="alternative splicing"/>
    <isoform>
        <id>Q9UK96-1</id>
        <name>1</name>
        <sequence type="displayed"/>
    </isoform>
    <isoform>
        <id>Q9UK96-2</id>
        <name>2</name>
        <sequence type="described" ref="VSP_056318"/>
    </isoform>
</comment>
<comment type="disease">
    <text evidence="4">Defects in FBXO10 may be a cause of diffuse large B-cell lymphoma by allowing the accumulation of BCL2, an oncoprotein that has a critical role in lymphomas.</text>
</comment>
<comment type="sequence caution" evidence="9">
    <conflict type="erroneous initiation">
        <sequence resource="EMBL-CDS" id="AAF03705"/>
    </conflict>
    <text>Extended N-terminus.</text>
</comment>
<comment type="sequence caution" evidence="9">
    <conflict type="miscellaneous discrepancy">
        <sequence resource="EMBL-CDS" id="AAF03705"/>
    </conflict>
    <text>Contaminating sequence. Sequence of unknown origin in the C-terminal part.</text>
</comment>
<comment type="sequence caution" evidence="9">
    <conflict type="erroneous initiation">
        <sequence resource="EMBL-CDS" id="AAF04519"/>
    </conflict>
    <text>Extended N-terminus.</text>
</comment>